<evidence type="ECO:0000255" key="1">
    <source>
        <dbReference type="HAMAP-Rule" id="MF_00080"/>
    </source>
</evidence>
<dbReference type="EMBL" id="AP009351">
    <property type="protein sequence ID" value="BAF67846.1"/>
    <property type="molecule type" value="Genomic_DNA"/>
</dbReference>
<dbReference type="RefSeq" id="WP_001791162.1">
    <property type="nucleotide sequence ID" value="NZ_JBBIAE010000001.1"/>
</dbReference>
<dbReference type="SMR" id="A6QHL4"/>
<dbReference type="GeneID" id="66839860"/>
<dbReference type="KEGG" id="sae:NWMN_1574"/>
<dbReference type="HOGENOM" id="CLU_054919_3_2_9"/>
<dbReference type="Proteomes" id="UP000006386">
    <property type="component" value="Chromosome"/>
</dbReference>
<dbReference type="GO" id="GO:0005829">
    <property type="term" value="C:cytosol"/>
    <property type="evidence" value="ECO:0007669"/>
    <property type="project" value="TreeGrafter"/>
</dbReference>
<dbReference type="GO" id="GO:0016020">
    <property type="term" value="C:membrane"/>
    <property type="evidence" value="ECO:0007669"/>
    <property type="project" value="TreeGrafter"/>
</dbReference>
<dbReference type="GO" id="GO:0043022">
    <property type="term" value="F:ribosome binding"/>
    <property type="evidence" value="ECO:0007669"/>
    <property type="project" value="TreeGrafter"/>
</dbReference>
<dbReference type="GO" id="GO:0003743">
    <property type="term" value="F:translation initiation factor activity"/>
    <property type="evidence" value="ECO:0007669"/>
    <property type="project" value="UniProtKB-UniRule"/>
</dbReference>
<dbReference type="GO" id="GO:0032790">
    <property type="term" value="P:ribosome disassembly"/>
    <property type="evidence" value="ECO:0007669"/>
    <property type="project" value="TreeGrafter"/>
</dbReference>
<dbReference type="FunFam" id="3.10.20.80:FF:000001">
    <property type="entry name" value="Translation initiation factor IF-3"/>
    <property type="match status" value="1"/>
</dbReference>
<dbReference type="FunFam" id="3.30.110.10:FF:000001">
    <property type="entry name" value="Translation initiation factor IF-3"/>
    <property type="match status" value="1"/>
</dbReference>
<dbReference type="Gene3D" id="3.30.110.10">
    <property type="entry name" value="Translation initiation factor 3 (IF-3), C-terminal domain"/>
    <property type="match status" value="1"/>
</dbReference>
<dbReference type="Gene3D" id="3.10.20.80">
    <property type="entry name" value="Translation initiation factor 3 (IF-3), N-terminal domain"/>
    <property type="match status" value="1"/>
</dbReference>
<dbReference type="HAMAP" id="MF_00080">
    <property type="entry name" value="IF_3"/>
    <property type="match status" value="1"/>
</dbReference>
<dbReference type="InterPro" id="IPR036788">
    <property type="entry name" value="T_IF-3_C_sf"/>
</dbReference>
<dbReference type="InterPro" id="IPR036787">
    <property type="entry name" value="T_IF-3_N_sf"/>
</dbReference>
<dbReference type="InterPro" id="IPR019813">
    <property type="entry name" value="Translation_initiation_fac3_CS"/>
</dbReference>
<dbReference type="InterPro" id="IPR001288">
    <property type="entry name" value="Translation_initiation_fac_3"/>
</dbReference>
<dbReference type="InterPro" id="IPR019815">
    <property type="entry name" value="Translation_initiation_fac_3_C"/>
</dbReference>
<dbReference type="InterPro" id="IPR019814">
    <property type="entry name" value="Translation_initiation_fac_3_N"/>
</dbReference>
<dbReference type="NCBIfam" id="TIGR00168">
    <property type="entry name" value="infC"/>
    <property type="match status" value="1"/>
</dbReference>
<dbReference type="PANTHER" id="PTHR10938">
    <property type="entry name" value="TRANSLATION INITIATION FACTOR IF-3"/>
    <property type="match status" value="1"/>
</dbReference>
<dbReference type="PANTHER" id="PTHR10938:SF0">
    <property type="entry name" value="TRANSLATION INITIATION FACTOR IF-3, MITOCHONDRIAL"/>
    <property type="match status" value="1"/>
</dbReference>
<dbReference type="Pfam" id="PF00707">
    <property type="entry name" value="IF3_C"/>
    <property type="match status" value="1"/>
</dbReference>
<dbReference type="Pfam" id="PF05198">
    <property type="entry name" value="IF3_N"/>
    <property type="match status" value="1"/>
</dbReference>
<dbReference type="SUPFAM" id="SSF55200">
    <property type="entry name" value="Translation initiation factor IF3, C-terminal domain"/>
    <property type="match status" value="1"/>
</dbReference>
<dbReference type="SUPFAM" id="SSF54364">
    <property type="entry name" value="Translation initiation factor IF3, N-terminal domain"/>
    <property type="match status" value="1"/>
</dbReference>
<dbReference type="PROSITE" id="PS00938">
    <property type="entry name" value="IF3"/>
    <property type="match status" value="1"/>
</dbReference>
<accession>A6QHL4</accession>
<name>IF3_STAAE</name>
<proteinExistence type="inferred from homology"/>
<comment type="function">
    <text evidence="1">IF-3 binds to the 30S ribosomal subunit and shifts the equilibrium between 70S ribosomes and their 50S and 30S subunits in favor of the free subunits, thus enhancing the availability of 30S subunits on which protein synthesis initiation begins.</text>
</comment>
<comment type="subunit">
    <text evidence="1">Monomer.</text>
</comment>
<comment type="subcellular location">
    <subcellularLocation>
        <location evidence="1">Cytoplasm</location>
    </subcellularLocation>
</comment>
<comment type="similarity">
    <text evidence="1">Belongs to the IF-3 family.</text>
</comment>
<feature type="chain" id="PRO_1000071212" description="Translation initiation factor IF-3">
    <location>
        <begin position="1"/>
        <end position="175"/>
    </location>
</feature>
<protein>
    <recommendedName>
        <fullName evidence="1">Translation initiation factor IF-3</fullName>
    </recommendedName>
</protein>
<reference key="1">
    <citation type="journal article" date="2008" name="J. Bacteriol.">
        <title>Genome sequence of Staphylococcus aureus strain Newman and comparative analysis of staphylococcal genomes: polymorphism and evolution of two major pathogenicity islands.</title>
        <authorList>
            <person name="Baba T."/>
            <person name="Bae T."/>
            <person name="Schneewind O."/>
            <person name="Takeuchi F."/>
            <person name="Hiramatsu K."/>
        </authorList>
    </citation>
    <scope>NUCLEOTIDE SEQUENCE [LARGE SCALE GENOMIC DNA]</scope>
    <source>
        <strain>Newman</strain>
    </source>
</reference>
<organism>
    <name type="scientific">Staphylococcus aureus (strain Newman)</name>
    <dbReference type="NCBI Taxonomy" id="426430"/>
    <lineage>
        <taxon>Bacteria</taxon>
        <taxon>Bacillati</taxon>
        <taxon>Bacillota</taxon>
        <taxon>Bacilli</taxon>
        <taxon>Bacillales</taxon>
        <taxon>Staphylococcaceae</taxon>
        <taxon>Staphylococcus</taxon>
    </lineage>
</organism>
<gene>
    <name evidence="1" type="primary">infC</name>
    <name type="ordered locus">NWMN_1574</name>
</gene>
<keyword id="KW-0963">Cytoplasm</keyword>
<keyword id="KW-0396">Initiation factor</keyword>
<keyword id="KW-0648">Protein biosynthesis</keyword>
<sequence length="175" mass="20214">MSTIAKDQTQINDKIRAKELRLIGQDGEQIGVKSKREALEMAERVDLDLVVVAPNAKPPVARIMDYGKFKFEQQKKEKEMKKKQKIINVKEIRLSPTIEEHDFQTKLKNGRKFLTKGDKCKVSIRFRGRAITHKEIGQRVLEKYADECKDIATVEQKPKMDGRQMFIMLAPTAEK</sequence>